<accession>P0DKZ7</accession>
<organism>
    <name type="scientific">Bothrops fonsecai</name>
    <name type="common">Fonseca's lancehead</name>
    <name type="synonym">Rhinocerophis fonsecai</name>
    <dbReference type="NCBI Taxonomy" id="157549"/>
    <lineage>
        <taxon>Eukaryota</taxon>
        <taxon>Metazoa</taxon>
        <taxon>Chordata</taxon>
        <taxon>Craniata</taxon>
        <taxon>Vertebrata</taxon>
        <taxon>Euteleostomi</taxon>
        <taxon>Lepidosauria</taxon>
        <taxon>Squamata</taxon>
        <taxon>Bifurcata</taxon>
        <taxon>Unidentata</taxon>
        <taxon>Episquamata</taxon>
        <taxon>Toxicofera</taxon>
        <taxon>Serpentes</taxon>
        <taxon>Colubroidea</taxon>
        <taxon>Viperidae</taxon>
        <taxon>Crotalinae</taxon>
        <taxon>Bothrops</taxon>
    </lineage>
</organism>
<feature type="peptide" id="PRO_0000421908" description="Bradykinin-potentiating peptide 12d">
    <location>
        <begin position="1"/>
        <end position="12"/>
    </location>
</feature>
<feature type="modified residue" description="Pyrrolidone carboxylic acid" evidence="2">
    <location>
        <position position="1"/>
    </location>
</feature>
<proteinExistence type="evidence at protein level"/>
<protein>
    <recommendedName>
        <fullName>Bradykinin-potentiating peptide 12d</fullName>
        <shortName>BPP-12d</shortName>
    </recommendedName>
</protein>
<keyword id="KW-0903">Direct protein sequencing</keyword>
<keyword id="KW-0382">Hypotensive agent</keyword>
<keyword id="KW-0481">Metalloenzyme inhibitor</keyword>
<keyword id="KW-0483">Metalloprotease inhibitor</keyword>
<keyword id="KW-0646">Protease inhibitor</keyword>
<keyword id="KW-0873">Pyrrolidone carboxylic acid</keyword>
<keyword id="KW-0964">Secreted</keyword>
<keyword id="KW-0800">Toxin</keyword>
<comment type="function">
    <text evidence="1 2">This peptide both inhibits the activity of the angiotensin-converting enzyme (ACE) and enhances the action of bradykinin by inhibiting the peptidases that inactivate it. It acts as an indirect hypotensive agent (By similarity).</text>
</comment>
<comment type="subcellular location">
    <subcellularLocation>
        <location>Secreted</location>
    </subcellularLocation>
</comment>
<comment type="tissue specificity">
    <text>Expressed by the venom gland.</text>
</comment>
<comment type="mass spectrometry" mass="1350.7" method="Electrospray" evidence="2"/>
<comment type="similarity">
    <text evidence="3">Belongs to the bradykinin-potentiating peptide family.</text>
</comment>
<name>BPPCD_BOTFO</name>
<reference key="1">
    <citation type="journal article" date="2012" name="Mol. Cell. Proteomics">
        <title>Peptidomics of three Bothrops snake venoms: insights into the molecular diversification of proteomes and peptidomes.</title>
        <authorList>
            <person name="Tashima A.K."/>
            <person name="Zelanis A."/>
            <person name="Kitano E.S."/>
            <person name="Ianzer D."/>
            <person name="Melo R.L."/>
            <person name="Rioli V."/>
            <person name="Sant'anna S.S."/>
            <person name="Schenberg A.C."/>
            <person name="Camargo A.C."/>
            <person name="Serrano S.M.T."/>
        </authorList>
    </citation>
    <scope>PROTEIN SEQUENCE</scope>
    <scope>FUNCTION</scope>
    <scope>PYROGLUTAMATE FORMATION AT GLN-1</scope>
    <scope>MASS SPECTROMETRY</scope>
    <source>
        <tissue>Venom</tissue>
    </source>
</reference>
<dbReference type="GO" id="GO:0005576">
    <property type="term" value="C:extracellular region"/>
    <property type="evidence" value="ECO:0007669"/>
    <property type="project" value="UniProtKB-SubCell"/>
</dbReference>
<dbReference type="GO" id="GO:0030414">
    <property type="term" value="F:peptidase inhibitor activity"/>
    <property type="evidence" value="ECO:0007669"/>
    <property type="project" value="UniProtKB-KW"/>
</dbReference>
<dbReference type="GO" id="GO:0090729">
    <property type="term" value="F:toxin activity"/>
    <property type="evidence" value="ECO:0007669"/>
    <property type="project" value="UniProtKB-KW"/>
</dbReference>
<dbReference type="GO" id="GO:0008217">
    <property type="term" value="P:regulation of blood pressure"/>
    <property type="evidence" value="ECO:0007669"/>
    <property type="project" value="UniProtKB-KW"/>
</dbReference>
<evidence type="ECO:0000250" key="1"/>
<evidence type="ECO:0000269" key="2">
    <source>
    </source>
</evidence>
<evidence type="ECO:0000305" key="3"/>
<sequence length="12" mass="1369">QNWPHPPMPPAP</sequence>